<comment type="function">
    <text evidence="1">DNA-dependent RNA polymerase catalyzes the transcription of DNA into RNA using the four ribonucleoside triphosphates as substrates.</text>
</comment>
<comment type="catalytic activity">
    <reaction evidence="1">
        <text>RNA(n) + a ribonucleoside 5'-triphosphate = RNA(n+1) + diphosphate</text>
        <dbReference type="Rhea" id="RHEA:21248"/>
        <dbReference type="Rhea" id="RHEA-COMP:14527"/>
        <dbReference type="Rhea" id="RHEA-COMP:17342"/>
        <dbReference type="ChEBI" id="CHEBI:33019"/>
        <dbReference type="ChEBI" id="CHEBI:61557"/>
        <dbReference type="ChEBI" id="CHEBI:140395"/>
        <dbReference type="EC" id="2.7.7.6"/>
    </reaction>
</comment>
<comment type="cofactor">
    <cofactor evidence="1">
        <name>Mg(2+)</name>
        <dbReference type="ChEBI" id="CHEBI:18420"/>
    </cofactor>
    <text evidence="1">Binds 1 Mg(2+) ion per subunit.</text>
</comment>
<comment type="cofactor">
    <cofactor evidence="1">
        <name>Zn(2+)</name>
        <dbReference type="ChEBI" id="CHEBI:29105"/>
    </cofactor>
    <text evidence="1">Binds 2 Zn(2+) ions per subunit.</text>
</comment>
<comment type="subunit">
    <text evidence="1">The RNAP catalytic core consists of 2 alpha, 1 beta, 1 beta' and 1 omega subunit. When a sigma factor is associated with the core the holoenzyme is formed, which can initiate transcription.</text>
</comment>
<comment type="similarity">
    <text evidence="1">Belongs to the RNA polymerase beta' chain family.</text>
</comment>
<name>RPOC_BORRA</name>
<keyword id="KW-0240">DNA-directed RNA polymerase</keyword>
<keyword id="KW-0460">Magnesium</keyword>
<keyword id="KW-0479">Metal-binding</keyword>
<keyword id="KW-0548">Nucleotidyltransferase</keyword>
<keyword id="KW-0804">Transcription</keyword>
<keyword id="KW-0808">Transferase</keyword>
<keyword id="KW-0862">Zinc</keyword>
<proteinExistence type="inferred from homology"/>
<evidence type="ECO:0000255" key="1">
    <source>
        <dbReference type="HAMAP-Rule" id="MF_01322"/>
    </source>
</evidence>
<organism>
    <name type="scientific">Borrelia recurrentis (strain A1)</name>
    <dbReference type="NCBI Taxonomy" id="412418"/>
    <lineage>
        <taxon>Bacteria</taxon>
        <taxon>Pseudomonadati</taxon>
        <taxon>Spirochaetota</taxon>
        <taxon>Spirochaetia</taxon>
        <taxon>Spirochaetales</taxon>
        <taxon>Borreliaceae</taxon>
        <taxon>Borrelia</taxon>
    </lineage>
</organism>
<sequence length="1377" mass="154568">MKEIKDFEKIRIKIASPDQIRSWSYGEVKKSETINYRTLRPEKDGLFCERIFGTTKEWECYCGKFKSIRYKGIICDRCNVEVTHFKVRRERMGHIELSAPVAHIWYYKYIPSRIGLLLDITASNLNSILYYEKYIVIEPGDTDLKKMQLLNEDEYSEAKERYGMSFSASMGAEAIKTLLENLDLDELSSKLRLQMIDKDDKTDKKLLRRLEIIENFKISGNKPEWMIMDVLPVIPPEIRPMVQLDGGRFATSDLNDLYRRVINRNNRLRKLLLLNAPEIIVRNEKRMLQESVDSLFDNSHKRKVVKGTSNRPLKSLSDALKGKQGRFRQNLLGKRVDYSGRSVIVVGPELKLHQCGIPAKMALELFKPFVIRKLIESEAVFNIKRAKSLIEQEVDEVWQILDNVIKEHPVLLNRAPTLHRLGIQAFEPVLVEGKAIKLHPLVCHAYNADFDGDQMAVHVPLTPAAQAESWALMLSTNNLLNPANGHPIVFPSQDIVLGLYYLTMERKNVMGEGRKFSNFNHVLLAINNKSLDYNAQIYVKVGEEYIKTTAGRVVFSEALPGKISFVNKTLSDYELQTLISEVYVIYGSSIVIEMLDIIKELGFRYATKFGCTISMSDIIVPQEKKVYVEKANREIAKIQNDYTKGVITGEERYNNVVSVWSKTNEELTNKMMEILKKDRDGFNVIYMMADSGARGSRNQIRQLAGMRGLMAKTSGDIIELPIISNFKEGLSVIEFFISTNGARKGLADTALKTADAGYLTRRLVDIAQDVVVRIEDCGTINGIKVEALKNGEEIIEPLREKAVGSYSIERIKSPITGEIILDVNEEITEDKIKLLETVGIDKLVIRSVLTCEAEHGVCQKCYGRDFSNNKPVSIGEAVGIIAAQSIGQPGTQLTMRTFHIGGVAQAGSEDDKIALKNAFILNGLEGFNVQVDGGLLFTRKGVLRIINVIYEESIKKIKKLKVSDSQKVIKGMSLFIDKSGVEVLSSHIGYIKIKDNKLMIVSEEQEISLKVGTRLEINVGDYVEAGRVIGTFDPFAEPIIAEVKGKIKFKDIILGTTLKEEINLETGNIEKRITDQVFESLDPRILIINDRGVEIASYVLPGDAYLQVEDGQDIDIGDIIAKLSKGSEKTQDITGGLPRVNDLFETRIPKNLTEMAKVSGVVQFKAIQKGKRLINVIDEYGVEHKHYIPAGKHLLVRDGDVVRAGDMLCDGRINPHDVLEILGGISLQEFLLAEIQDVYRKQGVSINDKHIGVIIKQMMKKVKIVSVGDTNFVYNQKVDKHAFYEQNKRVIEQGGEPAVASPILIGITKASLNIDSFISAASFQETTKVLTDASIAGSIDDLRGLKENVVIGHLIPTGTGMNLYKRVKVRENSNSEV</sequence>
<reference key="1">
    <citation type="journal article" date="2008" name="PLoS Genet.">
        <title>The genome of Borrelia recurrentis, the agent of deadly louse-borne relapsing fever, is a degraded subset of tick-borne Borrelia duttonii.</title>
        <authorList>
            <person name="Lescot M."/>
            <person name="Audic S."/>
            <person name="Robert C."/>
            <person name="Nguyen T.T."/>
            <person name="Blanc G."/>
            <person name="Cutler S.J."/>
            <person name="Wincker P."/>
            <person name="Couloux A."/>
            <person name="Claverie J.-M."/>
            <person name="Raoult D."/>
            <person name="Drancourt M."/>
        </authorList>
    </citation>
    <scope>NUCLEOTIDE SEQUENCE [LARGE SCALE GENOMIC DNA]</scope>
    <source>
        <strain>A1</strain>
    </source>
</reference>
<feature type="chain" id="PRO_1000141763" description="DNA-directed RNA polymerase subunit beta'">
    <location>
        <begin position="1"/>
        <end position="1377"/>
    </location>
</feature>
<feature type="binding site" evidence="1">
    <location>
        <position position="60"/>
    </location>
    <ligand>
        <name>Zn(2+)</name>
        <dbReference type="ChEBI" id="CHEBI:29105"/>
        <label>1</label>
    </ligand>
</feature>
<feature type="binding site" evidence="1">
    <location>
        <position position="62"/>
    </location>
    <ligand>
        <name>Zn(2+)</name>
        <dbReference type="ChEBI" id="CHEBI:29105"/>
        <label>1</label>
    </ligand>
</feature>
<feature type="binding site" evidence="1">
    <location>
        <position position="75"/>
    </location>
    <ligand>
        <name>Zn(2+)</name>
        <dbReference type="ChEBI" id="CHEBI:29105"/>
        <label>1</label>
    </ligand>
</feature>
<feature type="binding site" evidence="1">
    <location>
        <position position="78"/>
    </location>
    <ligand>
        <name>Zn(2+)</name>
        <dbReference type="ChEBI" id="CHEBI:29105"/>
        <label>1</label>
    </ligand>
</feature>
<feature type="binding site" evidence="1">
    <location>
        <position position="449"/>
    </location>
    <ligand>
        <name>Mg(2+)</name>
        <dbReference type="ChEBI" id="CHEBI:18420"/>
    </ligand>
</feature>
<feature type="binding site" evidence="1">
    <location>
        <position position="451"/>
    </location>
    <ligand>
        <name>Mg(2+)</name>
        <dbReference type="ChEBI" id="CHEBI:18420"/>
    </ligand>
</feature>
<feature type="binding site" evidence="1">
    <location>
        <position position="453"/>
    </location>
    <ligand>
        <name>Mg(2+)</name>
        <dbReference type="ChEBI" id="CHEBI:18420"/>
    </ligand>
</feature>
<feature type="binding site" evidence="1">
    <location>
        <position position="777"/>
    </location>
    <ligand>
        <name>Zn(2+)</name>
        <dbReference type="ChEBI" id="CHEBI:29105"/>
        <label>2</label>
    </ligand>
</feature>
<feature type="binding site" evidence="1">
    <location>
        <position position="851"/>
    </location>
    <ligand>
        <name>Zn(2+)</name>
        <dbReference type="ChEBI" id="CHEBI:29105"/>
        <label>2</label>
    </ligand>
</feature>
<feature type="binding site" evidence="1">
    <location>
        <position position="858"/>
    </location>
    <ligand>
        <name>Zn(2+)</name>
        <dbReference type="ChEBI" id="CHEBI:29105"/>
        <label>2</label>
    </ligand>
</feature>
<feature type="binding site" evidence="1">
    <location>
        <position position="861"/>
    </location>
    <ligand>
        <name>Zn(2+)</name>
        <dbReference type="ChEBI" id="CHEBI:29105"/>
        <label>2</label>
    </ligand>
</feature>
<accession>B5RRJ6</accession>
<dbReference type="EC" id="2.7.7.6" evidence="1"/>
<dbReference type="EMBL" id="CP000993">
    <property type="protein sequence ID" value="ACH94630.1"/>
    <property type="molecule type" value="Genomic_DNA"/>
</dbReference>
<dbReference type="RefSeq" id="WP_012538866.1">
    <property type="nucleotide sequence ID" value="NC_011244.1"/>
</dbReference>
<dbReference type="SMR" id="B5RRJ6"/>
<dbReference type="KEGG" id="bre:BRE_386"/>
<dbReference type="HOGENOM" id="CLU_000524_3_1_12"/>
<dbReference type="Proteomes" id="UP000000612">
    <property type="component" value="Chromosome"/>
</dbReference>
<dbReference type="GO" id="GO:0000428">
    <property type="term" value="C:DNA-directed RNA polymerase complex"/>
    <property type="evidence" value="ECO:0007669"/>
    <property type="project" value="UniProtKB-KW"/>
</dbReference>
<dbReference type="GO" id="GO:0003677">
    <property type="term" value="F:DNA binding"/>
    <property type="evidence" value="ECO:0007669"/>
    <property type="project" value="UniProtKB-UniRule"/>
</dbReference>
<dbReference type="GO" id="GO:0003899">
    <property type="term" value="F:DNA-directed RNA polymerase activity"/>
    <property type="evidence" value="ECO:0007669"/>
    <property type="project" value="UniProtKB-UniRule"/>
</dbReference>
<dbReference type="GO" id="GO:0000287">
    <property type="term" value="F:magnesium ion binding"/>
    <property type="evidence" value="ECO:0007669"/>
    <property type="project" value="UniProtKB-UniRule"/>
</dbReference>
<dbReference type="GO" id="GO:0008270">
    <property type="term" value="F:zinc ion binding"/>
    <property type="evidence" value="ECO:0007669"/>
    <property type="project" value="UniProtKB-UniRule"/>
</dbReference>
<dbReference type="GO" id="GO:0006351">
    <property type="term" value="P:DNA-templated transcription"/>
    <property type="evidence" value="ECO:0007669"/>
    <property type="project" value="UniProtKB-UniRule"/>
</dbReference>
<dbReference type="CDD" id="cd02655">
    <property type="entry name" value="RNAP_beta'_C"/>
    <property type="match status" value="1"/>
</dbReference>
<dbReference type="CDD" id="cd01609">
    <property type="entry name" value="RNAP_beta'_N"/>
    <property type="match status" value="1"/>
</dbReference>
<dbReference type="Gene3D" id="1.10.132.30">
    <property type="match status" value="1"/>
</dbReference>
<dbReference type="Gene3D" id="1.10.150.390">
    <property type="match status" value="1"/>
</dbReference>
<dbReference type="Gene3D" id="1.10.1790.20">
    <property type="match status" value="1"/>
</dbReference>
<dbReference type="Gene3D" id="1.10.40.90">
    <property type="match status" value="1"/>
</dbReference>
<dbReference type="Gene3D" id="2.40.40.20">
    <property type="match status" value="1"/>
</dbReference>
<dbReference type="Gene3D" id="2.40.50.100">
    <property type="match status" value="2"/>
</dbReference>
<dbReference type="Gene3D" id="4.10.860.120">
    <property type="entry name" value="RNA polymerase II, clamp domain"/>
    <property type="match status" value="1"/>
</dbReference>
<dbReference type="Gene3D" id="1.10.274.100">
    <property type="entry name" value="RNA polymerase Rpb1, domain 3"/>
    <property type="match status" value="1"/>
</dbReference>
<dbReference type="HAMAP" id="MF_01322">
    <property type="entry name" value="RNApol_bact_RpoC"/>
    <property type="match status" value="1"/>
</dbReference>
<dbReference type="InterPro" id="IPR045867">
    <property type="entry name" value="DNA-dir_RpoC_beta_prime"/>
</dbReference>
<dbReference type="InterPro" id="IPR012754">
    <property type="entry name" value="DNA-dir_RpoC_beta_prime_bact"/>
</dbReference>
<dbReference type="InterPro" id="IPR000722">
    <property type="entry name" value="RNA_pol_asu"/>
</dbReference>
<dbReference type="InterPro" id="IPR006592">
    <property type="entry name" value="RNA_pol_N"/>
</dbReference>
<dbReference type="InterPro" id="IPR007080">
    <property type="entry name" value="RNA_pol_Rpb1_1"/>
</dbReference>
<dbReference type="InterPro" id="IPR007066">
    <property type="entry name" value="RNA_pol_Rpb1_3"/>
</dbReference>
<dbReference type="InterPro" id="IPR042102">
    <property type="entry name" value="RNA_pol_Rpb1_3_sf"/>
</dbReference>
<dbReference type="InterPro" id="IPR007083">
    <property type="entry name" value="RNA_pol_Rpb1_4"/>
</dbReference>
<dbReference type="InterPro" id="IPR007081">
    <property type="entry name" value="RNA_pol_Rpb1_5"/>
</dbReference>
<dbReference type="InterPro" id="IPR044893">
    <property type="entry name" value="RNA_pol_Rpb1_clamp_domain"/>
</dbReference>
<dbReference type="InterPro" id="IPR038120">
    <property type="entry name" value="Rpb1_funnel_sf"/>
</dbReference>
<dbReference type="NCBIfam" id="TIGR02386">
    <property type="entry name" value="rpoC_TIGR"/>
    <property type="match status" value="1"/>
</dbReference>
<dbReference type="PANTHER" id="PTHR19376">
    <property type="entry name" value="DNA-DIRECTED RNA POLYMERASE"/>
    <property type="match status" value="1"/>
</dbReference>
<dbReference type="PANTHER" id="PTHR19376:SF54">
    <property type="entry name" value="DNA-DIRECTED RNA POLYMERASE SUBUNIT BETA"/>
    <property type="match status" value="1"/>
</dbReference>
<dbReference type="Pfam" id="PF04997">
    <property type="entry name" value="RNA_pol_Rpb1_1"/>
    <property type="match status" value="1"/>
</dbReference>
<dbReference type="Pfam" id="PF00623">
    <property type="entry name" value="RNA_pol_Rpb1_2"/>
    <property type="match status" value="2"/>
</dbReference>
<dbReference type="Pfam" id="PF04983">
    <property type="entry name" value="RNA_pol_Rpb1_3"/>
    <property type="match status" value="1"/>
</dbReference>
<dbReference type="Pfam" id="PF05000">
    <property type="entry name" value="RNA_pol_Rpb1_4"/>
    <property type="match status" value="1"/>
</dbReference>
<dbReference type="Pfam" id="PF04998">
    <property type="entry name" value="RNA_pol_Rpb1_5"/>
    <property type="match status" value="1"/>
</dbReference>
<dbReference type="SMART" id="SM00663">
    <property type="entry name" value="RPOLA_N"/>
    <property type="match status" value="1"/>
</dbReference>
<dbReference type="SUPFAM" id="SSF64484">
    <property type="entry name" value="beta and beta-prime subunits of DNA dependent RNA-polymerase"/>
    <property type="match status" value="1"/>
</dbReference>
<gene>
    <name evidence="1" type="primary">rpoC</name>
    <name type="ordered locus">BRE_386</name>
</gene>
<protein>
    <recommendedName>
        <fullName evidence="1">DNA-directed RNA polymerase subunit beta'</fullName>
        <shortName evidence="1">RNAP subunit beta'</shortName>
        <ecNumber evidence="1">2.7.7.6</ecNumber>
    </recommendedName>
    <alternativeName>
        <fullName evidence="1">RNA polymerase subunit beta'</fullName>
    </alternativeName>
    <alternativeName>
        <fullName evidence="1">Transcriptase subunit beta'</fullName>
    </alternativeName>
</protein>